<gene>
    <name evidence="1" type="primary">ndhH</name>
</gene>
<keyword id="KW-0150">Chloroplast</keyword>
<keyword id="KW-0472">Membrane</keyword>
<keyword id="KW-0520">NAD</keyword>
<keyword id="KW-0521">NADP</keyword>
<keyword id="KW-0934">Plastid</keyword>
<keyword id="KW-0618">Plastoquinone</keyword>
<keyword id="KW-0874">Quinone</keyword>
<keyword id="KW-0793">Thylakoid</keyword>
<keyword id="KW-1278">Translocase</keyword>
<keyword id="KW-0813">Transport</keyword>
<evidence type="ECO:0000255" key="1">
    <source>
        <dbReference type="HAMAP-Rule" id="MF_01358"/>
    </source>
</evidence>
<name>NDHH_CARPA</name>
<proteinExistence type="inferred from homology"/>
<sequence>MNIPATGKDFMIVNMGPHHPSMHGVLRLIVTLDGEDVIDCEPILGYLHRGMEKIAENRTIIQYLPYVTRWDYLATMFTEAITVNGPEQLGNIQVPKRASYIRVIMLELSRIASHLLWLGPFMADIGAQTPFFYIFRERELVYDLFEAATGMRMMHNYFRIGGIAADLPHGWIDKCLDFCDYFLTGVAEYQKLITRNPIFLERVEGVGIIGGEEAINWGLSGPMLRASGIEWDLRKVDHYECYDEFDWEVQWQKEGDSLARYLVRISEMTESIKIIQQALEGIPGGPYENLEIRCFDRKKDPEWNDFDYRFISKKPSPTFELPKQELYVRVEAPKGELGIFLIGDQSGFPWRWKIRPPGFINLQILPQLVKRMKLADIMTILGSIDIIMGEVDR</sequence>
<organism>
    <name type="scientific">Carica papaya</name>
    <name type="common">Papaya</name>
    <dbReference type="NCBI Taxonomy" id="3649"/>
    <lineage>
        <taxon>Eukaryota</taxon>
        <taxon>Viridiplantae</taxon>
        <taxon>Streptophyta</taxon>
        <taxon>Embryophyta</taxon>
        <taxon>Tracheophyta</taxon>
        <taxon>Spermatophyta</taxon>
        <taxon>Magnoliopsida</taxon>
        <taxon>eudicotyledons</taxon>
        <taxon>Gunneridae</taxon>
        <taxon>Pentapetalae</taxon>
        <taxon>rosids</taxon>
        <taxon>malvids</taxon>
        <taxon>Brassicales</taxon>
        <taxon>Caricaceae</taxon>
        <taxon>Carica</taxon>
    </lineage>
</organism>
<comment type="function">
    <text evidence="1">NDH shuttles electrons from NAD(P)H:plastoquinone, via FMN and iron-sulfur (Fe-S) centers, to quinones in the photosynthetic chain and possibly in a chloroplast respiratory chain. The immediate electron acceptor for the enzyme in this species is believed to be plastoquinone. Couples the redox reaction to proton translocation, and thus conserves the redox energy in a proton gradient.</text>
</comment>
<comment type="catalytic activity">
    <reaction evidence="1">
        <text>a plastoquinone + NADH + (n+1) H(+)(in) = a plastoquinol + NAD(+) + n H(+)(out)</text>
        <dbReference type="Rhea" id="RHEA:42608"/>
        <dbReference type="Rhea" id="RHEA-COMP:9561"/>
        <dbReference type="Rhea" id="RHEA-COMP:9562"/>
        <dbReference type="ChEBI" id="CHEBI:15378"/>
        <dbReference type="ChEBI" id="CHEBI:17757"/>
        <dbReference type="ChEBI" id="CHEBI:57540"/>
        <dbReference type="ChEBI" id="CHEBI:57945"/>
        <dbReference type="ChEBI" id="CHEBI:62192"/>
    </reaction>
</comment>
<comment type="catalytic activity">
    <reaction evidence="1">
        <text>a plastoquinone + NADPH + (n+1) H(+)(in) = a plastoquinol + NADP(+) + n H(+)(out)</text>
        <dbReference type="Rhea" id="RHEA:42612"/>
        <dbReference type="Rhea" id="RHEA-COMP:9561"/>
        <dbReference type="Rhea" id="RHEA-COMP:9562"/>
        <dbReference type="ChEBI" id="CHEBI:15378"/>
        <dbReference type="ChEBI" id="CHEBI:17757"/>
        <dbReference type="ChEBI" id="CHEBI:57783"/>
        <dbReference type="ChEBI" id="CHEBI:58349"/>
        <dbReference type="ChEBI" id="CHEBI:62192"/>
    </reaction>
</comment>
<comment type="subunit">
    <text evidence="1">NDH is composed of at least 16 different subunits, 5 of which are encoded in the nucleus.</text>
</comment>
<comment type="subcellular location">
    <subcellularLocation>
        <location evidence="1">Plastid</location>
        <location evidence="1">Chloroplast thylakoid membrane</location>
        <topology evidence="1">Peripheral membrane protein</topology>
        <orientation evidence="1">Stromal side</orientation>
    </subcellularLocation>
</comment>
<comment type="similarity">
    <text evidence="1">Belongs to the complex I 49 kDa subunit family.</text>
</comment>
<accession>B1A990</accession>
<protein>
    <recommendedName>
        <fullName evidence="1">NAD(P)H-quinone oxidoreductase subunit H, chloroplastic</fullName>
        <ecNumber evidence="1">7.1.1.-</ecNumber>
    </recommendedName>
    <alternativeName>
        <fullName>NAD(P)H dehydrogenase subunit H</fullName>
    </alternativeName>
    <alternativeName>
        <fullName evidence="1">NADH-plastoquinone oxidoreductase 49 kDa subunit</fullName>
    </alternativeName>
    <alternativeName>
        <fullName evidence="1">NADH-plastoquinone oxidoreductase subunit H</fullName>
    </alternativeName>
</protein>
<dbReference type="EC" id="7.1.1.-" evidence="1"/>
<dbReference type="EMBL" id="EU431223">
    <property type="protein sequence ID" value="ABY86831.1"/>
    <property type="molecule type" value="Genomic_DNA"/>
</dbReference>
<dbReference type="RefSeq" id="YP_001671738.1">
    <property type="nucleotide sequence ID" value="NC_010323.1"/>
</dbReference>
<dbReference type="SMR" id="B1A990"/>
<dbReference type="GeneID" id="5878377"/>
<dbReference type="KEGG" id="cpap:5878377"/>
<dbReference type="OrthoDB" id="1031002at2759"/>
<dbReference type="GO" id="GO:0009535">
    <property type="term" value="C:chloroplast thylakoid membrane"/>
    <property type="evidence" value="ECO:0007669"/>
    <property type="project" value="UniProtKB-SubCell"/>
</dbReference>
<dbReference type="GO" id="GO:0051287">
    <property type="term" value="F:NAD binding"/>
    <property type="evidence" value="ECO:0007669"/>
    <property type="project" value="InterPro"/>
</dbReference>
<dbReference type="GO" id="GO:0016655">
    <property type="term" value="F:oxidoreductase activity, acting on NAD(P)H, quinone or similar compound as acceptor"/>
    <property type="evidence" value="ECO:0007669"/>
    <property type="project" value="UniProtKB-UniRule"/>
</dbReference>
<dbReference type="GO" id="GO:0048038">
    <property type="term" value="F:quinone binding"/>
    <property type="evidence" value="ECO:0007669"/>
    <property type="project" value="UniProtKB-KW"/>
</dbReference>
<dbReference type="GO" id="GO:0019684">
    <property type="term" value="P:photosynthesis, light reaction"/>
    <property type="evidence" value="ECO:0007669"/>
    <property type="project" value="UniProtKB-UniRule"/>
</dbReference>
<dbReference type="FunFam" id="1.10.645.10:FF:000003">
    <property type="entry name" value="NAD(P)H-quinone oxidoreductase subunit H, chloroplastic"/>
    <property type="match status" value="1"/>
</dbReference>
<dbReference type="Gene3D" id="1.10.645.10">
    <property type="entry name" value="Cytochrome-c3 Hydrogenase, chain B"/>
    <property type="match status" value="1"/>
</dbReference>
<dbReference type="HAMAP" id="MF_01358">
    <property type="entry name" value="NDH1_NuoD"/>
    <property type="match status" value="1"/>
</dbReference>
<dbReference type="InterPro" id="IPR001135">
    <property type="entry name" value="NADH_Q_OxRdtase_suD"/>
</dbReference>
<dbReference type="InterPro" id="IPR014029">
    <property type="entry name" value="NADH_UbQ_OxRdtase_49kDa_CS"/>
</dbReference>
<dbReference type="InterPro" id="IPR022885">
    <property type="entry name" value="NDH1_su_D/H"/>
</dbReference>
<dbReference type="InterPro" id="IPR029014">
    <property type="entry name" value="NiFe-Hase_large"/>
</dbReference>
<dbReference type="NCBIfam" id="NF004739">
    <property type="entry name" value="PRK06075.1"/>
    <property type="match status" value="1"/>
</dbReference>
<dbReference type="NCBIfam" id="NF005649">
    <property type="entry name" value="PRK07415.1"/>
    <property type="match status" value="1"/>
</dbReference>
<dbReference type="PANTHER" id="PTHR11993:SF10">
    <property type="entry name" value="NADH DEHYDROGENASE [UBIQUINONE] IRON-SULFUR PROTEIN 2, MITOCHONDRIAL"/>
    <property type="match status" value="1"/>
</dbReference>
<dbReference type="PANTHER" id="PTHR11993">
    <property type="entry name" value="NADH-UBIQUINONE OXIDOREDUCTASE 49 KDA SUBUNIT"/>
    <property type="match status" value="1"/>
</dbReference>
<dbReference type="Pfam" id="PF00346">
    <property type="entry name" value="Complex1_49kDa"/>
    <property type="match status" value="1"/>
</dbReference>
<dbReference type="SUPFAM" id="SSF56762">
    <property type="entry name" value="HydB/Nqo4-like"/>
    <property type="match status" value="1"/>
</dbReference>
<dbReference type="PROSITE" id="PS00535">
    <property type="entry name" value="COMPLEX1_49K"/>
    <property type="match status" value="1"/>
</dbReference>
<feature type="chain" id="PRO_0000357972" description="NAD(P)H-quinone oxidoreductase subunit H, chloroplastic">
    <location>
        <begin position="1"/>
        <end position="393"/>
    </location>
</feature>
<reference key="1">
    <citation type="journal article" date="2008" name="Nature">
        <title>The draft genome of the transgenic tropical fruit tree papaya (Carica papaya Linnaeus).</title>
        <authorList>
            <person name="Ming R."/>
            <person name="Hou S."/>
            <person name="Feng Y."/>
            <person name="Yu Q."/>
            <person name="Dionne-Laporte A."/>
            <person name="Saw J.H."/>
            <person name="Senin P."/>
            <person name="Wang W."/>
            <person name="Ly B.V."/>
            <person name="Lewis K.L."/>
            <person name="Salzberg S.L."/>
            <person name="Feng L."/>
            <person name="Jones M.R."/>
            <person name="Skelton R.L."/>
            <person name="Murray J.E."/>
            <person name="Chen C."/>
            <person name="Qian W."/>
            <person name="Shen J."/>
            <person name="Du P."/>
            <person name="Eustice M."/>
            <person name="Tong E."/>
            <person name="Tang H."/>
            <person name="Lyons E."/>
            <person name="Paull R.E."/>
            <person name="Michael T.P."/>
            <person name="Wall K."/>
            <person name="Rice D.W."/>
            <person name="Albert H."/>
            <person name="Wang M.L."/>
            <person name="Zhu Y.J."/>
            <person name="Schatz M."/>
            <person name="Nagarajan N."/>
            <person name="Acob R.A."/>
            <person name="Guan P."/>
            <person name="Blas A."/>
            <person name="Wai C.M."/>
            <person name="Ackerman C.M."/>
            <person name="Ren Y."/>
            <person name="Liu C."/>
            <person name="Wang J."/>
            <person name="Wang J."/>
            <person name="Na J.K."/>
            <person name="Shakirov E.V."/>
            <person name="Haas B."/>
            <person name="Thimmapuram J."/>
            <person name="Nelson D."/>
            <person name="Wang X."/>
            <person name="Bowers J.E."/>
            <person name="Gschwend A.R."/>
            <person name="Delcher A.L."/>
            <person name="Singh R."/>
            <person name="Suzuki J.Y."/>
            <person name="Tripathi S."/>
            <person name="Neupane K."/>
            <person name="Wei H."/>
            <person name="Irikura B."/>
            <person name="Paidi M."/>
            <person name="Jiang N."/>
            <person name="Zhang W."/>
            <person name="Presting G."/>
            <person name="Windsor A."/>
            <person name="Navajas-Perez R."/>
            <person name="Torres M.J."/>
            <person name="Feltus F.A."/>
            <person name="Porter B."/>
            <person name="Li Y."/>
            <person name="Burroughs A.M."/>
            <person name="Luo M.C."/>
            <person name="Liu L."/>
            <person name="Christopher D.A."/>
            <person name="Mount S.M."/>
            <person name="Moore P.H."/>
            <person name="Sugimura T."/>
            <person name="Jiang J."/>
            <person name="Schuler M.A."/>
            <person name="Friedman V."/>
            <person name="Mitchell-Olds T."/>
            <person name="Shippen D.E."/>
            <person name="dePamphilis C.W."/>
            <person name="Palmer J.D."/>
            <person name="Freeling M."/>
            <person name="Paterson A.H."/>
            <person name="Gonsalves D."/>
            <person name="Wang L."/>
            <person name="Alam M."/>
        </authorList>
    </citation>
    <scope>NUCLEOTIDE SEQUENCE [LARGE SCALE GENOMIC DNA]</scope>
    <source>
        <strain>cv. SunUp</strain>
    </source>
</reference>
<geneLocation type="chloroplast"/>